<sequence length="905" mass="103329">MQGNERIQDKNEKEKAYAPYLDGASVSTDNGPILSVFALQEIMQKIRQNQSDMAAHAPDVDGAIPEVMTIISGIKGLLEEKDYKVINAPPNSFRTIPMQSTEYVLQVNTFYERMSEIGGPIDETDPIGFYALILEKLKFLKSEGAFILQGIATKDYRGAEIADPEIIGVSFQNALSHLAAIDRQIIQDTLNGMIIENGLVADRNVDVFRAAMSDPIYRIHNVLQGYIEGIQYGELRESVNWLMRLGLRKRIEFANDFLTDFRRADTIWIISQRLPINANVIWNVPRCHIANLITNVALCLPTGEYLMPNPRINSITITQRITQTNPFSIISGLTPTAVQMNDVRKIYLALMFPNQIILDIKPDSSHAVDPVLRMVAGVLGHVMFTYGPIMTNITPTMAELLDRALSDYLLYMYNNRIPINYGPTGQPLDFRIGARNQYDCNAFRADPQTGRGYNGWGVVDVQRVQPSPYDHVQRVIRYCDIDSREIIDPRTYGMNMTYPIFREMLRMLVAAGKDQEAAYLRQMLPFHMIRFARINQIINEDLLSAFSLPDQNFDVVLHNFIQGNFGETDPVVLEVSWASIWFAFVRRFEPIARSDLLEAAPLIEARYAAELSTMQMDVQQLRMMRARVPDTVINATPSQCWKAVLKNAPEPIKNLMNLSHSFSFVNVRDIVRWSQQRDIQESLAYVLNREAWAIANDFEDLMLVDHVYIQRTMLPEPRLDDINEFRRQGFFYTNMIDGAPPIGDVTHYTYAIANLQANMGQFRAAIRRTLDDNGWIQFGGMLRNIKIKFFDSRPPDEILTAMPYVYTEEERDGVRMVAFKYATTATAYFLLYNVAYSNTPDTLITVNPTFTMTKIHMRKKIVRRVRAPDVVSQVNKRLVAYKGKMRLMDVTKCLKTGVQLARPTI</sequence>
<protein>
    <recommendedName>
        <fullName>Core protein VP3</fullName>
    </recommendedName>
</protein>
<dbReference type="EMBL" id="M94681">
    <property type="protein sequence ID" value="AAA42538.1"/>
    <property type="status" value="ALT_SEQ"/>
    <property type="molecule type" value="Genomic_RNA"/>
</dbReference>
<dbReference type="EMBL" id="D26572">
    <property type="protein sequence ID" value="BAA05621.1"/>
    <property type="molecule type" value="Genomic_RNA"/>
</dbReference>
<dbReference type="PIR" id="B44053">
    <property type="entry name" value="P3XRA4"/>
</dbReference>
<dbReference type="RefSeq" id="YP_052962.1">
    <property type="nucleotide sequence ID" value="NC_006017.1"/>
</dbReference>
<dbReference type="SMR" id="P32509"/>
<dbReference type="GeneID" id="2930877"/>
<dbReference type="KEGG" id="vg:2930877"/>
<dbReference type="Proteomes" id="UP000201896">
    <property type="component" value="Genome"/>
</dbReference>
<dbReference type="GO" id="GO:0044423">
    <property type="term" value="C:virion component"/>
    <property type="evidence" value="ECO:0007669"/>
    <property type="project" value="UniProtKB-KW"/>
</dbReference>
<dbReference type="GO" id="GO:0005198">
    <property type="term" value="F:structural molecule activity"/>
    <property type="evidence" value="ECO:0007669"/>
    <property type="project" value="InterPro"/>
</dbReference>
<dbReference type="InterPro" id="IPR002614">
    <property type="entry name" value="Inner_layer_core_VP3_Orbivir"/>
</dbReference>
<dbReference type="InterPro" id="IPR016029">
    <property type="entry name" value="Inner_layer_core_VP3_Reovir"/>
</dbReference>
<dbReference type="Pfam" id="PF01700">
    <property type="entry name" value="Orbi_VP3"/>
    <property type="match status" value="1"/>
</dbReference>
<dbReference type="SUPFAM" id="SSF56831">
    <property type="entry name" value="Reovirus inner layer core protein p3"/>
    <property type="match status" value="1"/>
</dbReference>
<proteinExistence type="inferred from homology"/>
<keyword id="KW-0946">Virion</keyword>
<reference key="1">
    <citation type="journal article" date="1992" name="Virology">
        <title>Evolutionary relationships among the gnat-transmitted orbiviruses that cause African horse sickness, bluetongue, and epizootic hemorrhagic disease as evidenced by their capsid protein sequences.</title>
        <authorList>
            <person name="Iwata H."/>
            <person name="Yamagawa M."/>
            <person name="Roy P."/>
        </authorList>
    </citation>
    <scope>NUCLEOTIDE SEQUENCE [GENOMIC RNA]</scope>
    <source>
        <strain>Serotype 4</strain>
    </source>
</reference>
<reference key="2">
    <citation type="journal article" date="1994" name="Arch. Virol.">
        <title>Rapid detection of African horsesickness virus by the reverse transcriptase polymerase chain reaction (RT-PCR) using the amplimer for segment 3 (VP3 gene).</title>
        <authorList>
            <person name="Sakamoto K."/>
            <person name="Punyahotra R."/>
            <person name="Mizukoshi N."/>
            <person name="Ueda S."/>
            <person name="Imagawa H."/>
            <person name="Sugiura T."/>
            <person name="Kamada M."/>
            <person name="Fukusho A."/>
        </authorList>
    </citation>
    <scope>NUCLEOTIDE SEQUENCE [GENOMIC RNA]</scope>
    <source>
        <strain>Serotype 4</strain>
    </source>
</reference>
<feature type="chain" id="PRO_0000222699" description="Core protein VP3">
    <location>
        <begin position="1"/>
        <end position="905"/>
    </location>
</feature>
<feature type="sequence conflict" description="In Ref. 1." evidence="1" ref="1">
    <original>YA</original>
    <variation>LS</variation>
    <location>
        <begin position="17"/>
        <end position="18"/>
    </location>
</feature>
<feature type="sequence conflict" description="In Ref. 1; AAA42538." evidence="1" ref="1">
    <original>S</original>
    <variation>D</variation>
    <location>
        <position position="25"/>
    </location>
</feature>
<feature type="sequence conflict" description="In Ref. 1; AAA42538." evidence="1" ref="1">
    <original>I</original>
    <variation>V</variation>
    <location>
        <position position="121"/>
    </location>
</feature>
<feature type="sequence conflict" description="In Ref. 1." evidence="1" ref="1">
    <original>I</original>
    <variation>V</variation>
    <location>
        <position position="195"/>
    </location>
</feature>
<feature type="sequence conflict" description="In Ref. 1." evidence="1" ref="1">
    <original>Q</original>
    <variation>P</variation>
    <location>
        <position position="231"/>
    </location>
</feature>
<feature type="sequence conflict" description="In Ref. 1." evidence="1" ref="1">
    <original>F</original>
    <variation>S</variation>
    <location>
        <position position="253"/>
    </location>
</feature>
<feature type="sequence conflict" description="In Ref. 1." evidence="1" ref="1">
    <original>RALSDY</original>
    <variation>AALTII</variation>
    <location>
        <begin position="403"/>
        <end position="408"/>
    </location>
</feature>
<feature type="sequence conflict" description="In Ref. 2; BAA05621." evidence="1" ref="2">
    <original>DPQTGRGYNGW</original>
    <variation>THKRVGLQRV</variation>
    <location>
        <begin position="446"/>
        <end position="456"/>
    </location>
</feature>
<feature type="sequence conflict" description="In Ref. 1; AAA42538." evidence="1" ref="1">
    <original>F</original>
    <variation>L</variation>
    <location>
        <position position="560"/>
    </location>
</feature>
<feature type="sequence conflict" description="In Ref. 1." evidence="1" ref="1">
    <original>F</original>
    <variation>P</variation>
    <location>
        <position position="662"/>
    </location>
</feature>
<feature type="sequence conflict" description="In Ref. 1." evidence="1" ref="1">
    <original>Y</original>
    <variation>T</variation>
    <location>
        <position position="708"/>
    </location>
</feature>
<feature type="sequence conflict" description="In Ref. 1; AAA42538." evidence="1" ref="1">
    <original>Y</original>
    <variation>H</variation>
    <location>
        <position position="732"/>
    </location>
</feature>
<feature type="sequence conflict" description="In Ref. 1." evidence="1" ref="1">
    <original>MPYVYTEEERDGVRMVAFKYATTATAYFLLYNVAYSNTPDTLITVNPTF</original>
    <variation>IANLQANMGQFRAAIRRTLDDNGWIQFGGMLRNIKIKFFDSRPPDEILT</variation>
    <location>
        <begin position="802"/>
        <end position="850"/>
    </location>
</feature>
<feature type="sequence conflict" description="In Ref. 1; AAA42538." evidence="1" ref="1">
    <original>V</original>
    <variation>L</variation>
    <location>
        <position position="871"/>
    </location>
</feature>
<feature type="sequence conflict" description="In Ref. 1." evidence="1" ref="1">
    <original>R</original>
    <variation>A</variation>
    <location>
        <position position="902"/>
    </location>
</feature>
<feature type="sequence conflict" description="In Ref. 1." evidence="1" ref="1">
    <original>I</original>
    <variation>V</variation>
    <location>
        <position position="905"/>
    </location>
</feature>
<accession>P32509</accession>
<accession>Q64923</accession>
<organism>
    <name type="scientific">African horse sickness virus</name>
    <name type="common">AHSV</name>
    <name type="synonym">Orbivirus alphaequi</name>
    <dbReference type="NCBI Taxonomy" id="40050"/>
    <lineage>
        <taxon>Viruses</taxon>
        <taxon>Riboviria</taxon>
        <taxon>Orthornavirae</taxon>
        <taxon>Duplornaviricota</taxon>
        <taxon>Resentoviricetes</taxon>
        <taxon>Reovirales</taxon>
        <taxon>Sedoreoviridae</taxon>
        <taxon>Orbivirus</taxon>
    </lineage>
</organism>
<name>VP3_AHSV</name>
<comment type="function">
    <text>The VP3 protein is one of the five proteins (with VP1, VP4, VP6 and VP7) which form the inner capsid of the virus.</text>
</comment>
<comment type="subcellular location">
    <subcellularLocation>
        <location evidence="1">Virion</location>
    </subcellularLocation>
</comment>
<comment type="similarity">
    <text evidence="1">Belongs to the orbivirus VP3 family.</text>
</comment>
<gene>
    <name type="primary">Segment-3</name>
    <name type="synonym">L3</name>
</gene>
<evidence type="ECO:0000305" key="1"/>